<name>VAX2_HUMAN</name>
<reference key="1">
    <citation type="journal article" date="1999" name="Proc. Natl. Acad. Sci. U.S.A.">
        <title>A homeobox gene, vax2, controls the patterning of the eye dorsoventral axis.</title>
        <authorList>
            <person name="Barbieri A.M."/>
            <person name="Lupo G."/>
            <person name="Bulfone A."/>
            <person name="Andreazzoli M."/>
            <person name="Mariani M."/>
            <person name="Fougerousse F."/>
            <person name="Consalez G.G."/>
            <person name="Borsani G."/>
            <person name="Beckmann J.S."/>
            <person name="Barsacchi G."/>
            <person name="Ballabio A."/>
            <person name="Banfi S."/>
        </authorList>
    </citation>
    <scope>NUCLEOTIDE SEQUENCE [MRNA]</scope>
    <scope>POSSIBLE FUNCTION IN EYE DEVELOPMENT</scope>
    <scope>DEVELOPMENTAL STAGE</scope>
    <source>
        <tissue>Teratocarcinoma</tissue>
    </source>
</reference>
<reference key="2">
    <citation type="submission" date="2003-05" db="EMBL/GenBank/DDBJ databases">
        <title>Cloning of human full-length CDSs in BD Creator(TM) system donor vector.</title>
        <authorList>
            <person name="Kalnine N."/>
            <person name="Chen X."/>
            <person name="Rolfs A."/>
            <person name="Halleck A."/>
            <person name="Hines L."/>
            <person name="Eisenstein S."/>
            <person name="Koundinya M."/>
            <person name="Raphael J."/>
            <person name="Moreira D."/>
            <person name="Kelley T."/>
            <person name="LaBaer J."/>
            <person name="Lin Y."/>
            <person name="Phelan M."/>
            <person name="Farmer A."/>
        </authorList>
    </citation>
    <scope>NUCLEOTIDE SEQUENCE [LARGE SCALE MRNA]</scope>
</reference>
<reference key="3">
    <citation type="submission" date="2005-09" db="EMBL/GenBank/DDBJ databases">
        <authorList>
            <person name="Mural R.J."/>
            <person name="Istrail S."/>
            <person name="Sutton G.G."/>
            <person name="Florea L."/>
            <person name="Halpern A.L."/>
            <person name="Mobarry C.M."/>
            <person name="Lippert R."/>
            <person name="Walenz B."/>
            <person name="Shatkay H."/>
            <person name="Dew I."/>
            <person name="Miller J.R."/>
            <person name="Flanigan M.J."/>
            <person name="Edwards N.J."/>
            <person name="Bolanos R."/>
            <person name="Fasulo D."/>
            <person name="Halldorsson B.V."/>
            <person name="Hannenhalli S."/>
            <person name="Turner R."/>
            <person name="Yooseph S."/>
            <person name="Lu F."/>
            <person name="Nusskern D.R."/>
            <person name="Shue B.C."/>
            <person name="Zheng X.H."/>
            <person name="Zhong F."/>
            <person name="Delcher A.L."/>
            <person name="Huson D.H."/>
            <person name="Kravitz S.A."/>
            <person name="Mouchard L."/>
            <person name="Reinert K."/>
            <person name="Remington K.A."/>
            <person name="Clark A.G."/>
            <person name="Waterman M.S."/>
            <person name="Eichler E.E."/>
            <person name="Adams M.D."/>
            <person name="Hunkapiller M.W."/>
            <person name="Myers E.W."/>
            <person name="Venter J.C."/>
        </authorList>
    </citation>
    <scope>NUCLEOTIDE SEQUENCE [LARGE SCALE GENOMIC DNA]</scope>
</reference>
<reference key="4">
    <citation type="journal article" date="2004" name="Genome Res.">
        <title>The status, quality, and expansion of the NIH full-length cDNA project: the Mammalian Gene Collection (MGC).</title>
        <authorList>
            <consortium name="The MGC Project Team"/>
        </authorList>
    </citation>
    <scope>NUCLEOTIDE SEQUENCE [LARGE SCALE MRNA]</scope>
    <source>
        <tissue>Uterus</tissue>
    </source>
</reference>
<reference key="5">
    <citation type="journal article" date="2012" name="Hum. Mutat.">
        <title>VAX1 mutation associated with microphthalmia, corpus callosum agenesis, and orofacial clefting: The first description of a VAX1 phenotype in humans.</title>
        <authorList>
            <person name="Slavotinek A.M."/>
            <person name="Chao R."/>
            <person name="Vacik T."/>
            <person name="Yahyavi M."/>
            <person name="Abouzeid H."/>
            <person name="Bardakjian T."/>
            <person name="Schneider A."/>
            <person name="Shaw G."/>
            <person name="Sherr E.H."/>
            <person name="Lemke G."/>
            <person name="Youssef M."/>
            <person name="Schorderet D.F."/>
        </authorList>
    </citation>
    <scope>VARIANTS GLY-24 AND ARG-254</scope>
</reference>
<gene>
    <name type="primary">VAX2</name>
</gene>
<accession>Q9UIW0</accession>
<accession>Q53Y33</accession>
<evidence type="ECO:0000250" key="1"/>
<evidence type="ECO:0000255" key="2">
    <source>
        <dbReference type="PROSITE-ProRule" id="PRU00108"/>
    </source>
</evidence>
<evidence type="ECO:0000256" key="3">
    <source>
        <dbReference type="SAM" id="MobiDB-lite"/>
    </source>
</evidence>
<evidence type="ECO:0000269" key="4">
    <source>
    </source>
</evidence>
<evidence type="ECO:0000269" key="5">
    <source>
    </source>
</evidence>
<evidence type="ECO:0000305" key="6"/>
<comment type="function">
    <text evidence="1">Transcription factor that may function in dorsoventral specification of the forebrain. Regulates the expression of Wnt signaling antagonists including the expression of a truncated TCF7L2 isoform that cannot bind CTNNB1 and acts therefore as a potent dominant-negative Wnt antagonist. Plays a crucial role in eye development and, in particular, in the specification of the ventral optic vesicle (By similarity). May be a regulator of axial polarization in the retina.</text>
</comment>
<comment type="interaction">
    <interactant intactId="EBI-12090999">
        <id>Q9UIW0</id>
    </interactant>
    <interactant intactId="EBI-357275">
        <id>Q99471</id>
        <label>PFDN5</label>
    </interactant>
    <organismsDiffer>false</organismsDiffer>
    <experiments>3</experiments>
</comment>
<comment type="interaction">
    <interactant intactId="EBI-12090999">
        <id>Q9UIW0</id>
    </interactant>
    <interactant intactId="EBI-12029004">
        <id>P78424</id>
        <label>POU6F2</label>
    </interactant>
    <organismsDiffer>false</organismsDiffer>
    <experiments>3</experiments>
</comment>
<comment type="interaction">
    <interactant intactId="EBI-12090999">
        <id>Q9UIW0</id>
    </interactant>
    <interactant intactId="EBI-12068150">
        <id>Q6NVU6</id>
        <label>UFSP1</label>
    </interactant>
    <organismsDiffer>false</organismsDiffer>
    <experiments>3</experiments>
</comment>
<comment type="subcellular location">
    <subcellularLocation>
        <location evidence="6">Nucleus</location>
    </subcellularLocation>
</comment>
<comment type="developmental stage">
    <text evidence="4">Expressed in the ventral part of the optic vesicles at 7 week dpc.</text>
</comment>
<comment type="similarity">
    <text evidence="6">Belongs to the EMX homeobox family.</text>
</comment>
<dbReference type="EMBL" id="Y17791">
    <property type="protein sequence ID" value="CAB56166.1"/>
    <property type="molecule type" value="mRNA"/>
</dbReference>
<dbReference type="EMBL" id="BT007035">
    <property type="protein sequence ID" value="AAP35683.1"/>
    <property type="molecule type" value="mRNA"/>
</dbReference>
<dbReference type="EMBL" id="CH471053">
    <property type="protein sequence ID" value="EAW99792.1"/>
    <property type="molecule type" value="Genomic_DNA"/>
</dbReference>
<dbReference type="EMBL" id="BC006336">
    <property type="protein sequence ID" value="AAH06336.1"/>
    <property type="molecule type" value="mRNA"/>
</dbReference>
<dbReference type="CCDS" id="CCDS1911.1"/>
<dbReference type="RefSeq" id="NP_036608.1">
    <property type="nucleotide sequence ID" value="NM_012476.3"/>
</dbReference>
<dbReference type="SMR" id="Q9UIW0"/>
<dbReference type="BioGRID" id="117338">
    <property type="interactions" value="8"/>
</dbReference>
<dbReference type="FunCoup" id="Q9UIW0">
    <property type="interactions" value="317"/>
</dbReference>
<dbReference type="IntAct" id="Q9UIW0">
    <property type="interactions" value="6"/>
</dbReference>
<dbReference type="STRING" id="9606.ENSP00000234392"/>
<dbReference type="GlyGen" id="Q9UIW0">
    <property type="glycosylation" value="2 sites, 1 O-linked glycan (2 sites)"/>
</dbReference>
<dbReference type="iPTMnet" id="Q9UIW0"/>
<dbReference type="PhosphoSitePlus" id="Q9UIW0"/>
<dbReference type="BioMuta" id="VAX2"/>
<dbReference type="DMDM" id="20532295"/>
<dbReference type="jPOST" id="Q9UIW0"/>
<dbReference type="MassIVE" id="Q9UIW0"/>
<dbReference type="PaxDb" id="9606-ENSP00000234392"/>
<dbReference type="PeptideAtlas" id="Q9UIW0"/>
<dbReference type="ProteomicsDB" id="84572"/>
<dbReference type="Antibodypedia" id="31160">
    <property type="antibodies" value="123 antibodies from 23 providers"/>
</dbReference>
<dbReference type="DNASU" id="25806"/>
<dbReference type="Ensembl" id="ENST00000234392.3">
    <property type="protein sequence ID" value="ENSP00000234392.2"/>
    <property type="gene ID" value="ENSG00000116035.4"/>
</dbReference>
<dbReference type="GeneID" id="25806"/>
<dbReference type="KEGG" id="hsa:25806"/>
<dbReference type="MANE-Select" id="ENST00000234392.3">
    <property type="protein sequence ID" value="ENSP00000234392.2"/>
    <property type="RefSeq nucleotide sequence ID" value="NM_012476.3"/>
    <property type="RefSeq protein sequence ID" value="NP_036608.1"/>
</dbReference>
<dbReference type="UCSC" id="uc002shh.4">
    <property type="organism name" value="human"/>
</dbReference>
<dbReference type="AGR" id="HGNC:12661"/>
<dbReference type="CTD" id="25806"/>
<dbReference type="DisGeNET" id="25806"/>
<dbReference type="GeneCards" id="VAX2"/>
<dbReference type="HGNC" id="HGNC:12661">
    <property type="gene designation" value="VAX2"/>
</dbReference>
<dbReference type="HPA" id="ENSG00000116035">
    <property type="expression patterns" value="Group enriched (brain, retina)"/>
</dbReference>
<dbReference type="MalaCards" id="VAX2"/>
<dbReference type="MIM" id="604295">
    <property type="type" value="gene"/>
</dbReference>
<dbReference type="neXtProt" id="NX_Q9UIW0"/>
<dbReference type="OpenTargets" id="ENSG00000116035"/>
<dbReference type="PharmGKB" id="PA37284"/>
<dbReference type="VEuPathDB" id="HostDB:ENSG00000116035"/>
<dbReference type="eggNOG" id="KOG0843">
    <property type="taxonomic scope" value="Eukaryota"/>
</dbReference>
<dbReference type="GeneTree" id="ENSGT00940000161043"/>
<dbReference type="HOGENOM" id="CLU_071850_1_0_1"/>
<dbReference type="InParanoid" id="Q9UIW0"/>
<dbReference type="OMA" id="GETDHCR"/>
<dbReference type="OrthoDB" id="6159439at2759"/>
<dbReference type="PAN-GO" id="Q9UIW0">
    <property type="GO annotations" value="6 GO annotations based on evolutionary models"/>
</dbReference>
<dbReference type="PhylomeDB" id="Q9UIW0"/>
<dbReference type="TreeFam" id="TF319504"/>
<dbReference type="PathwayCommons" id="Q9UIW0"/>
<dbReference type="SignaLink" id="Q9UIW0"/>
<dbReference type="BioGRID-ORCS" id="25806">
    <property type="hits" value="13 hits in 1174 CRISPR screens"/>
</dbReference>
<dbReference type="ChiTaRS" id="VAX2">
    <property type="organism name" value="human"/>
</dbReference>
<dbReference type="GenomeRNAi" id="25806"/>
<dbReference type="Pharos" id="Q9UIW0">
    <property type="development level" value="Tbio"/>
</dbReference>
<dbReference type="PRO" id="PR:Q9UIW0"/>
<dbReference type="Proteomes" id="UP000005640">
    <property type="component" value="Chromosome 2"/>
</dbReference>
<dbReference type="RNAct" id="Q9UIW0">
    <property type="molecule type" value="protein"/>
</dbReference>
<dbReference type="Bgee" id="ENSG00000116035">
    <property type="expression patterns" value="Expressed in primordial germ cell in gonad and 90 other cell types or tissues"/>
</dbReference>
<dbReference type="ExpressionAtlas" id="Q9UIW0">
    <property type="expression patterns" value="baseline and differential"/>
</dbReference>
<dbReference type="GO" id="GO:0000785">
    <property type="term" value="C:chromatin"/>
    <property type="evidence" value="ECO:0000247"/>
    <property type="project" value="NTNU_SB"/>
</dbReference>
<dbReference type="GO" id="GO:0005737">
    <property type="term" value="C:cytoplasm"/>
    <property type="evidence" value="ECO:0007669"/>
    <property type="project" value="Ensembl"/>
</dbReference>
<dbReference type="GO" id="GO:0005634">
    <property type="term" value="C:nucleus"/>
    <property type="evidence" value="ECO:0000318"/>
    <property type="project" value="GO_Central"/>
</dbReference>
<dbReference type="GO" id="GO:0031490">
    <property type="term" value="F:chromatin DNA binding"/>
    <property type="evidence" value="ECO:0007669"/>
    <property type="project" value="Ensembl"/>
</dbReference>
<dbReference type="GO" id="GO:0003700">
    <property type="term" value="F:DNA-binding transcription factor activity"/>
    <property type="evidence" value="ECO:0000303"/>
    <property type="project" value="ProtInc"/>
</dbReference>
<dbReference type="GO" id="GO:0000981">
    <property type="term" value="F:DNA-binding transcription factor activity, RNA polymerase II-specific"/>
    <property type="evidence" value="ECO:0000247"/>
    <property type="project" value="NTNU_SB"/>
</dbReference>
<dbReference type="GO" id="GO:0001227">
    <property type="term" value="F:DNA-binding transcription repressor activity, RNA polymerase II-specific"/>
    <property type="evidence" value="ECO:0007669"/>
    <property type="project" value="Ensembl"/>
</dbReference>
<dbReference type="GO" id="GO:0000978">
    <property type="term" value="F:RNA polymerase II cis-regulatory region sequence-specific DNA binding"/>
    <property type="evidence" value="ECO:0000318"/>
    <property type="project" value="GO_Central"/>
</dbReference>
<dbReference type="GO" id="GO:0001162">
    <property type="term" value="F:RNA polymerase II intronic transcription regulatory region sequence-specific DNA binding"/>
    <property type="evidence" value="ECO:0007669"/>
    <property type="project" value="Ensembl"/>
</dbReference>
<dbReference type="GO" id="GO:1990837">
    <property type="term" value="F:sequence-specific double-stranded DNA binding"/>
    <property type="evidence" value="ECO:0000314"/>
    <property type="project" value="ARUK-UCL"/>
</dbReference>
<dbReference type="GO" id="GO:0007409">
    <property type="term" value="P:axonogenesis"/>
    <property type="evidence" value="ECO:0007669"/>
    <property type="project" value="Ensembl"/>
</dbReference>
<dbReference type="GO" id="GO:0007420">
    <property type="term" value="P:brain development"/>
    <property type="evidence" value="ECO:0000318"/>
    <property type="project" value="GO_Central"/>
</dbReference>
<dbReference type="GO" id="GO:0007417">
    <property type="term" value="P:central nervous system development"/>
    <property type="evidence" value="ECO:0000318"/>
    <property type="project" value="GO_Central"/>
</dbReference>
<dbReference type="GO" id="GO:0009950">
    <property type="term" value="P:dorsal/ventral axis specification"/>
    <property type="evidence" value="ECO:0007669"/>
    <property type="project" value="Ensembl"/>
</dbReference>
<dbReference type="GO" id="GO:0007398">
    <property type="term" value="P:ectoderm development"/>
    <property type="evidence" value="ECO:0000304"/>
    <property type="project" value="ProtInc"/>
</dbReference>
<dbReference type="GO" id="GO:0048048">
    <property type="term" value="P:embryonic eye morphogenesis"/>
    <property type="evidence" value="ECO:0007669"/>
    <property type="project" value="Ensembl"/>
</dbReference>
<dbReference type="GO" id="GO:0030900">
    <property type="term" value="P:forebrain development"/>
    <property type="evidence" value="ECO:0000250"/>
    <property type="project" value="UniProtKB"/>
</dbReference>
<dbReference type="GO" id="GO:0030182">
    <property type="term" value="P:neuron differentiation"/>
    <property type="evidence" value="ECO:0000318"/>
    <property type="project" value="GO_Central"/>
</dbReference>
<dbReference type="GO" id="GO:0006357">
    <property type="term" value="P:regulation of transcription by RNA polymerase II"/>
    <property type="evidence" value="ECO:0000318"/>
    <property type="project" value="GO_Central"/>
</dbReference>
<dbReference type="GO" id="GO:0060041">
    <property type="term" value="P:retina development in camera-type eye"/>
    <property type="evidence" value="ECO:0007669"/>
    <property type="project" value="Ensembl"/>
</dbReference>
<dbReference type="GO" id="GO:0007601">
    <property type="term" value="P:visual perception"/>
    <property type="evidence" value="ECO:0000304"/>
    <property type="project" value="ProtInc"/>
</dbReference>
<dbReference type="GO" id="GO:0016055">
    <property type="term" value="P:Wnt signaling pathway"/>
    <property type="evidence" value="ECO:0007669"/>
    <property type="project" value="UniProtKB-KW"/>
</dbReference>
<dbReference type="CDD" id="cd00086">
    <property type="entry name" value="homeodomain"/>
    <property type="match status" value="1"/>
</dbReference>
<dbReference type="FunFam" id="1.10.10.60:FF:000131">
    <property type="entry name" value="Ventral anterior homeobox 2"/>
    <property type="match status" value="1"/>
</dbReference>
<dbReference type="Gene3D" id="1.10.10.60">
    <property type="entry name" value="Homeodomain-like"/>
    <property type="match status" value="1"/>
</dbReference>
<dbReference type="InterPro" id="IPR050877">
    <property type="entry name" value="EMX-VAX-Noto_Homeobox_TFs"/>
</dbReference>
<dbReference type="InterPro" id="IPR001356">
    <property type="entry name" value="HD"/>
</dbReference>
<dbReference type="InterPro" id="IPR020479">
    <property type="entry name" value="HD_metazoa"/>
</dbReference>
<dbReference type="InterPro" id="IPR017970">
    <property type="entry name" value="Homeobox_CS"/>
</dbReference>
<dbReference type="InterPro" id="IPR009057">
    <property type="entry name" value="Homeodomain-like_sf"/>
</dbReference>
<dbReference type="InterPro" id="IPR000047">
    <property type="entry name" value="HTH_motif"/>
</dbReference>
<dbReference type="PANTHER" id="PTHR24339">
    <property type="entry name" value="HOMEOBOX PROTEIN EMX-RELATED"/>
    <property type="match status" value="1"/>
</dbReference>
<dbReference type="PANTHER" id="PTHR24339:SF34">
    <property type="entry name" value="VENTRAL ANTERIOR HOMEOBOX 2"/>
    <property type="match status" value="1"/>
</dbReference>
<dbReference type="Pfam" id="PF00046">
    <property type="entry name" value="Homeodomain"/>
    <property type="match status" value="1"/>
</dbReference>
<dbReference type="PRINTS" id="PR00024">
    <property type="entry name" value="HOMEOBOX"/>
</dbReference>
<dbReference type="PRINTS" id="PR00031">
    <property type="entry name" value="HTHREPRESSR"/>
</dbReference>
<dbReference type="SMART" id="SM00389">
    <property type="entry name" value="HOX"/>
    <property type="match status" value="1"/>
</dbReference>
<dbReference type="SUPFAM" id="SSF46689">
    <property type="entry name" value="Homeodomain-like"/>
    <property type="match status" value="1"/>
</dbReference>
<dbReference type="PROSITE" id="PS00027">
    <property type="entry name" value="HOMEOBOX_1"/>
    <property type="match status" value="1"/>
</dbReference>
<dbReference type="PROSITE" id="PS50071">
    <property type="entry name" value="HOMEOBOX_2"/>
    <property type="match status" value="1"/>
</dbReference>
<keyword id="KW-0217">Developmental protein</keyword>
<keyword id="KW-0238">DNA-binding</keyword>
<keyword id="KW-0371">Homeobox</keyword>
<keyword id="KW-0539">Nucleus</keyword>
<keyword id="KW-1267">Proteomics identification</keyword>
<keyword id="KW-1185">Reference proteome</keyword>
<keyword id="KW-0804">Transcription</keyword>
<keyword id="KW-0805">Transcription regulation</keyword>
<keyword id="KW-0879">Wnt signaling pathway</keyword>
<proteinExistence type="evidence at protein level"/>
<sequence>MGDGGAERDRGPARRAESGGGGGRCGDRSGAGDLRADGGGHSPTEVAGTSASSPAGSRESGADSDGQPGPGEADHCRRILVRDAKGTIREIVLPKGLDLDRPKRTRTSFTAEQLYRLEMEFQRCQYVVGRERTELARQLNLSETQVKVWFQNRRTKQKKDQSRDLEKRASSSASEAFATSNILRLLEQGRLLSVPRAPSLLALTPSLPGLPASHRGTSLGDPRNSSPRLNPLSSASASPPLPPPLPAVCFSSAPLLDLPAGYELGSSAFEPYSWLERKVGSASSCKKANT</sequence>
<feature type="chain" id="PRO_0000049351" description="Ventral anterior homeobox 2">
    <location>
        <begin position="1"/>
        <end position="290"/>
    </location>
</feature>
<feature type="DNA-binding region" description="Homeobox" evidence="2">
    <location>
        <begin position="102"/>
        <end position="161"/>
    </location>
</feature>
<feature type="region of interest" description="Disordered" evidence="3">
    <location>
        <begin position="1"/>
        <end position="75"/>
    </location>
</feature>
<feature type="region of interest" description="Disordered" evidence="3">
    <location>
        <begin position="205"/>
        <end position="240"/>
    </location>
</feature>
<feature type="compositionally biased region" description="Basic and acidic residues" evidence="3">
    <location>
        <begin position="1"/>
        <end position="17"/>
    </location>
</feature>
<feature type="compositionally biased region" description="Low complexity" evidence="3">
    <location>
        <begin position="222"/>
        <end position="238"/>
    </location>
</feature>
<feature type="sequence variant" id="VAR_067308" description="In dbSNP:rs2234496." evidence="5">
    <original>R</original>
    <variation>G</variation>
    <location>
        <position position="24"/>
    </location>
</feature>
<feature type="sequence variant" id="VAR_020152" description="In dbSNP:rs2234500." evidence="5">
    <original>P</original>
    <variation>R</variation>
    <location>
        <position position="254"/>
    </location>
</feature>
<protein>
    <recommendedName>
        <fullName>Ventral anterior homeobox 2</fullName>
    </recommendedName>
</protein>
<organism>
    <name type="scientific">Homo sapiens</name>
    <name type="common">Human</name>
    <dbReference type="NCBI Taxonomy" id="9606"/>
    <lineage>
        <taxon>Eukaryota</taxon>
        <taxon>Metazoa</taxon>
        <taxon>Chordata</taxon>
        <taxon>Craniata</taxon>
        <taxon>Vertebrata</taxon>
        <taxon>Euteleostomi</taxon>
        <taxon>Mammalia</taxon>
        <taxon>Eutheria</taxon>
        <taxon>Euarchontoglires</taxon>
        <taxon>Primates</taxon>
        <taxon>Haplorrhini</taxon>
        <taxon>Catarrhini</taxon>
        <taxon>Hominidae</taxon>
        <taxon>Homo</taxon>
    </lineage>
</organism>